<feature type="chain" id="PRO_1000003184" description="Ribosome-recycling factor">
    <location>
        <begin position="1"/>
        <end position="185"/>
    </location>
</feature>
<feature type="region of interest" description="Disordered" evidence="2">
    <location>
        <begin position="138"/>
        <end position="185"/>
    </location>
</feature>
<feature type="compositionally biased region" description="Basic and acidic residues" evidence="2">
    <location>
        <begin position="138"/>
        <end position="179"/>
    </location>
</feature>
<proteinExistence type="inferred from homology"/>
<protein>
    <recommendedName>
        <fullName evidence="1">Ribosome-recycling factor</fullName>
        <shortName evidence="1">RRF</shortName>
    </recommendedName>
    <alternativeName>
        <fullName evidence="1">Ribosome-releasing factor</fullName>
    </alternativeName>
</protein>
<dbReference type="EMBL" id="CP000413">
    <property type="protein sequence ID" value="ABJ60195.1"/>
    <property type="molecule type" value="Genomic_DNA"/>
</dbReference>
<dbReference type="RefSeq" id="WP_003647487.1">
    <property type="nucleotide sequence ID" value="NZ_WBMG01000005.1"/>
</dbReference>
<dbReference type="SMR" id="Q044C7"/>
<dbReference type="GeneID" id="48924774"/>
<dbReference type="KEGG" id="lga:LGAS_0804"/>
<dbReference type="HOGENOM" id="CLU_073981_2_0_9"/>
<dbReference type="BioCyc" id="LGAS324831:G1G6Y-798-MONOMER"/>
<dbReference type="Proteomes" id="UP000000664">
    <property type="component" value="Chromosome"/>
</dbReference>
<dbReference type="GO" id="GO:0005737">
    <property type="term" value="C:cytoplasm"/>
    <property type="evidence" value="ECO:0007669"/>
    <property type="project" value="UniProtKB-SubCell"/>
</dbReference>
<dbReference type="GO" id="GO:0043023">
    <property type="term" value="F:ribosomal large subunit binding"/>
    <property type="evidence" value="ECO:0007669"/>
    <property type="project" value="TreeGrafter"/>
</dbReference>
<dbReference type="GO" id="GO:0006415">
    <property type="term" value="P:translational termination"/>
    <property type="evidence" value="ECO:0007669"/>
    <property type="project" value="UniProtKB-UniRule"/>
</dbReference>
<dbReference type="CDD" id="cd00520">
    <property type="entry name" value="RRF"/>
    <property type="match status" value="1"/>
</dbReference>
<dbReference type="FunFam" id="1.10.132.20:FF:000001">
    <property type="entry name" value="Ribosome-recycling factor"/>
    <property type="match status" value="1"/>
</dbReference>
<dbReference type="FunFam" id="3.30.1360.40:FF:000001">
    <property type="entry name" value="Ribosome-recycling factor"/>
    <property type="match status" value="1"/>
</dbReference>
<dbReference type="Gene3D" id="3.30.1360.40">
    <property type="match status" value="1"/>
</dbReference>
<dbReference type="Gene3D" id="1.10.132.20">
    <property type="entry name" value="Ribosome-recycling factor"/>
    <property type="match status" value="1"/>
</dbReference>
<dbReference type="HAMAP" id="MF_00040">
    <property type="entry name" value="RRF"/>
    <property type="match status" value="1"/>
</dbReference>
<dbReference type="InterPro" id="IPR002661">
    <property type="entry name" value="Ribosome_recyc_fac"/>
</dbReference>
<dbReference type="InterPro" id="IPR023584">
    <property type="entry name" value="Ribosome_recyc_fac_dom"/>
</dbReference>
<dbReference type="InterPro" id="IPR036191">
    <property type="entry name" value="RRF_sf"/>
</dbReference>
<dbReference type="NCBIfam" id="TIGR00496">
    <property type="entry name" value="frr"/>
    <property type="match status" value="1"/>
</dbReference>
<dbReference type="PANTHER" id="PTHR20982:SF3">
    <property type="entry name" value="MITOCHONDRIAL RIBOSOME RECYCLING FACTOR PSEUDO 1"/>
    <property type="match status" value="1"/>
</dbReference>
<dbReference type="PANTHER" id="PTHR20982">
    <property type="entry name" value="RIBOSOME RECYCLING FACTOR"/>
    <property type="match status" value="1"/>
</dbReference>
<dbReference type="Pfam" id="PF01765">
    <property type="entry name" value="RRF"/>
    <property type="match status" value="1"/>
</dbReference>
<dbReference type="SUPFAM" id="SSF55194">
    <property type="entry name" value="Ribosome recycling factor, RRF"/>
    <property type="match status" value="1"/>
</dbReference>
<evidence type="ECO:0000255" key="1">
    <source>
        <dbReference type="HAMAP-Rule" id="MF_00040"/>
    </source>
</evidence>
<evidence type="ECO:0000256" key="2">
    <source>
        <dbReference type="SAM" id="MobiDB-lite"/>
    </source>
</evidence>
<organism>
    <name type="scientific">Lactobacillus gasseri (strain ATCC 33323 / DSM 20243 / BCRC 14619 / CIP 102991 / JCM 1131 / KCTC 3163 / NCIMB 11718 / NCTC 13722 / AM63)</name>
    <dbReference type="NCBI Taxonomy" id="324831"/>
    <lineage>
        <taxon>Bacteria</taxon>
        <taxon>Bacillati</taxon>
        <taxon>Bacillota</taxon>
        <taxon>Bacilli</taxon>
        <taxon>Lactobacillales</taxon>
        <taxon>Lactobacillaceae</taxon>
        <taxon>Lactobacillus</taxon>
    </lineage>
</organism>
<sequence>MANEVIEKAKDNMKKSIAVFQKELGGIRAGVANASLLEGIKVDYYGVPTPLTQMSSVSIPEARVLMVTPYDKSSLDDIEHAILASDLGITPANDGTVIRIVIPQLTGERRQEIAKQVGKLAEKGKIAVRNVRRDAMDTLKRQEKNGDITEDEQRSLEKQVQKVTDDATKEIDKLADQKSQEITQG</sequence>
<comment type="function">
    <text evidence="1">Responsible for the release of ribosomes from messenger RNA at the termination of protein biosynthesis. May increase the efficiency of translation by recycling ribosomes from one round of translation to another.</text>
</comment>
<comment type="subcellular location">
    <subcellularLocation>
        <location evidence="1">Cytoplasm</location>
    </subcellularLocation>
</comment>
<comment type="similarity">
    <text evidence="1">Belongs to the RRF family.</text>
</comment>
<name>RRF_LACGA</name>
<accession>Q044C7</accession>
<keyword id="KW-0963">Cytoplasm</keyword>
<keyword id="KW-0648">Protein biosynthesis</keyword>
<reference key="1">
    <citation type="journal article" date="2006" name="Proc. Natl. Acad. Sci. U.S.A.">
        <title>Comparative genomics of the lactic acid bacteria.</title>
        <authorList>
            <person name="Makarova K.S."/>
            <person name="Slesarev A."/>
            <person name="Wolf Y.I."/>
            <person name="Sorokin A."/>
            <person name="Mirkin B."/>
            <person name="Koonin E.V."/>
            <person name="Pavlov A."/>
            <person name="Pavlova N."/>
            <person name="Karamychev V."/>
            <person name="Polouchine N."/>
            <person name="Shakhova V."/>
            <person name="Grigoriev I."/>
            <person name="Lou Y."/>
            <person name="Rohksar D."/>
            <person name="Lucas S."/>
            <person name="Huang K."/>
            <person name="Goodstein D.M."/>
            <person name="Hawkins T."/>
            <person name="Plengvidhya V."/>
            <person name="Welker D."/>
            <person name="Hughes J."/>
            <person name="Goh Y."/>
            <person name="Benson A."/>
            <person name="Baldwin K."/>
            <person name="Lee J.-H."/>
            <person name="Diaz-Muniz I."/>
            <person name="Dosti B."/>
            <person name="Smeianov V."/>
            <person name="Wechter W."/>
            <person name="Barabote R."/>
            <person name="Lorca G."/>
            <person name="Altermann E."/>
            <person name="Barrangou R."/>
            <person name="Ganesan B."/>
            <person name="Xie Y."/>
            <person name="Rawsthorne H."/>
            <person name="Tamir D."/>
            <person name="Parker C."/>
            <person name="Breidt F."/>
            <person name="Broadbent J.R."/>
            <person name="Hutkins R."/>
            <person name="O'Sullivan D."/>
            <person name="Steele J."/>
            <person name="Unlu G."/>
            <person name="Saier M.H. Jr."/>
            <person name="Klaenhammer T."/>
            <person name="Richardson P."/>
            <person name="Kozyavkin S."/>
            <person name="Weimer B.C."/>
            <person name="Mills D.A."/>
        </authorList>
    </citation>
    <scope>NUCLEOTIDE SEQUENCE [LARGE SCALE GENOMIC DNA]</scope>
    <source>
        <strain>ATCC 33323 / DSM 20243 / BCRC 14619 / CIP 102991 / JCM 1131 / KCTC 3163 / NCIMB 11718 / NCTC 13722 / AM63</strain>
    </source>
</reference>
<gene>
    <name evidence="1" type="primary">frr</name>
    <name type="ordered locus">LGAS_0804</name>
</gene>